<comment type="function">
    <text evidence="1 3">Acts as a plasma-membrane magnesium transporter (PubMed:16984228). Can also mediate the transport of other divalent metal cations in an order of Ba(2+) &gt; Ni(2+) &gt; Co(2+) &gt; Fe(2+) &gt; Mn(2+) (By similarity).</text>
</comment>
<comment type="catalytic activity">
    <reaction evidence="3">
        <text>Mg(2+)(in) = Mg(2+)(out)</text>
        <dbReference type="Rhea" id="RHEA:29827"/>
        <dbReference type="ChEBI" id="CHEBI:18420"/>
    </reaction>
</comment>
<comment type="catalytic activity">
    <reaction evidence="1">
        <text>Mn(2+)(in) = Mn(2+)(out)</text>
        <dbReference type="Rhea" id="RHEA:28699"/>
        <dbReference type="ChEBI" id="CHEBI:29035"/>
    </reaction>
</comment>
<comment type="catalytic activity">
    <reaction evidence="1">
        <text>Co(2+)(in) = Co(2+)(out)</text>
        <dbReference type="Rhea" id="RHEA:28578"/>
        <dbReference type="ChEBI" id="CHEBI:48828"/>
    </reaction>
</comment>
<comment type="catalytic activity">
    <reaction evidence="1">
        <text>Ni(2+)(in) = Ni(2+)(out)</text>
        <dbReference type="Rhea" id="RHEA:29831"/>
        <dbReference type="ChEBI" id="CHEBI:49786"/>
    </reaction>
</comment>
<comment type="catalytic activity">
    <reaction evidence="1">
        <text>Fe(2+)(in) = Fe(2+)(out)</text>
        <dbReference type="Rhea" id="RHEA:28486"/>
        <dbReference type="ChEBI" id="CHEBI:29033"/>
    </reaction>
</comment>
<comment type="interaction">
    <interactant intactId="EBI-10290130">
        <id>Q96JW4</id>
    </interactant>
    <interactant intactId="EBI-19125216">
        <id>Q86WK6</id>
        <label>AMIGO1</label>
    </interactant>
    <organismsDiffer>false</organismsDiffer>
    <experiments>3</experiments>
</comment>
<comment type="interaction">
    <interactant intactId="EBI-10290130">
        <id>Q96JW4</id>
    </interactant>
    <interactant intactId="EBI-13059134">
        <id>Q13520</id>
        <label>AQP6</label>
    </interactant>
    <organismsDiffer>false</organismsDiffer>
    <experiments>3</experiments>
</comment>
<comment type="interaction">
    <interactant intactId="EBI-10290130">
        <id>Q96JW4</id>
    </interactant>
    <interactant intactId="EBI-7797864">
        <id>P11912</id>
        <label>CD79A</label>
    </interactant>
    <organismsDiffer>false</organismsDiffer>
    <experiments>3</experiments>
</comment>
<comment type="interaction">
    <interactant intactId="EBI-10290130">
        <id>Q96JW4</id>
    </interactant>
    <interactant intactId="EBI-1043514">
        <id>O75503</id>
        <label>CLN5</label>
    </interactant>
    <organismsDiffer>false</organismsDiffer>
    <experiments>3</experiments>
</comment>
<comment type="interaction">
    <interactant intactId="EBI-10290130">
        <id>Q96JW4</id>
    </interactant>
    <interactant intactId="EBI-3915253">
        <id>Q15125</id>
        <label>EBP</label>
    </interactant>
    <organismsDiffer>false</organismsDiffer>
    <experiments>3</experiments>
</comment>
<comment type="interaction">
    <interactant intactId="EBI-10290130">
        <id>Q96JW4</id>
    </interactant>
    <interactant intactId="EBI-781551">
        <id>Q9Y282</id>
        <label>ERGIC3</label>
    </interactant>
    <organismsDiffer>false</organismsDiffer>
    <experiments>3</experiments>
</comment>
<comment type="interaction">
    <interactant intactId="EBI-10290130">
        <id>Q96JW4</id>
    </interactant>
    <interactant intactId="EBI-17973325">
        <id>P60508</id>
        <label>ERVFRD-1</label>
    </interactant>
    <organismsDiffer>false</organismsDiffer>
    <experiments>3</experiments>
</comment>
<comment type="interaction">
    <interactant intactId="EBI-10290130">
        <id>Q96JW4</id>
    </interactant>
    <interactant intactId="EBI-743099">
        <id>Q969F0</id>
        <label>FATE1</label>
    </interactant>
    <organismsDiffer>false</organismsDiffer>
    <experiments>3</experiments>
</comment>
<comment type="interaction">
    <interactant intactId="EBI-10290130">
        <id>Q96JW4</id>
    </interactant>
    <interactant intactId="EBI-12142257">
        <id>Q8TBE3</id>
        <label>FNDC9</label>
    </interactant>
    <organismsDiffer>false</organismsDiffer>
    <experiments>3</experiments>
</comment>
<comment type="interaction">
    <interactant intactId="EBI-10290130">
        <id>Q96JW4</id>
    </interactant>
    <interactant intactId="EBI-12839380">
        <id>P21217</id>
        <label>FUT3</label>
    </interactant>
    <organismsDiffer>false</organismsDiffer>
    <experiments>3</experiments>
</comment>
<comment type="interaction">
    <interactant intactId="EBI-10290130">
        <id>Q96JW4</id>
    </interactant>
    <interactant intactId="EBI-750433">
        <id>P36382</id>
        <label>GJA5</label>
    </interactant>
    <organismsDiffer>false</organismsDiffer>
    <experiments>3</experiments>
</comment>
<comment type="interaction">
    <interactant intactId="EBI-10290130">
        <id>Q96JW4</id>
    </interactant>
    <interactant intactId="EBI-3909454">
        <id>O95377</id>
        <label>GJB5</label>
    </interactant>
    <organismsDiffer>false</organismsDiffer>
    <experiments>3</experiments>
</comment>
<comment type="interaction">
    <interactant intactId="EBI-10290130">
        <id>Q96JW4</id>
    </interactant>
    <interactant intactId="EBI-11955647">
        <id>Q8TDV0</id>
        <label>GPR151</label>
    </interactant>
    <organismsDiffer>false</organismsDiffer>
    <experiments>3</experiments>
</comment>
<comment type="interaction">
    <interactant intactId="EBI-10290130">
        <id>Q96JW4</id>
    </interactant>
    <interactant intactId="EBI-18076404">
        <id>O15529</id>
        <label>GPR42</label>
    </interactant>
    <organismsDiffer>false</organismsDiffer>
    <experiments>3</experiments>
</comment>
<comment type="interaction">
    <interactant intactId="EBI-10290130">
        <id>Q96JW4</id>
    </interactant>
    <interactant intactId="EBI-11721746">
        <id>Q8TED1</id>
        <label>GPX8</label>
    </interactant>
    <organismsDiffer>false</organismsDiffer>
    <experiments>3</experiments>
</comment>
<comment type="interaction">
    <interactant intactId="EBI-10290130">
        <id>Q96JW4</id>
    </interactant>
    <interactant intactId="EBI-2867874">
        <id>Q9UM44</id>
        <label>HHLA2</label>
    </interactant>
    <organismsDiffer>false</organismsDiffer>
    <experiments>3</experiments>
</comment>
<comment type="interaction">
    <interactant intactId="EBI-10290130">
        <id>Q96JW4</id>
    </interactant>
    <interactant intactId="EBI-720480">
        <id>P24593</id>
        <label>IGFBP5</label>
    </interactant>
    <organismsDiffer>false</organismsDiffer>
    <experiments>3</experiments>
</comment>
<comment type="interaction">
    <interactant intactId="EBI-10290130">
        <id>Q96JW4</id>
    </interactant>
    <interactant intactId="EBI-19045531">
        <id>Q6UWB1</id>
        <label>IL27RA</label>
    </interactant>
    <organismsDiffer>false</organismsDiffer>
    <experiments>3</experiments>
</comment>
<comment type="interaction">
    <interactant intactId="EBI-10290130">
        <id>Q96JW4</id>
    </interactant>
    <interactant intactId="EBI-749265">
        <id>Q8N6L0</id>
        <label>KASH5</label>
    </interactant>
    <organismsDiffer>false</organismsDiffer>
    <experiments>6</experiments>
</comment>
<comment type="interaction">
    <interactant intactId="EBI-10290130">
        <id>Q96JW4</id>
    </interactant>
    <interactant intactId="EBI-17272405">
        <id>Q8N743</id>
        <label>KIR3DL3</label>
    </interactant>
    <organismsDiffer>false</organismsDiffer>
    <experiments>3</experiments>
</comment>
<comment type="interaction">
    <interactant intactId="EBI-10290130">
        <id>Q96JW4</id>
    </interactant>
    <interactant intactId="EBI-10173166">
        <id>Q5T700</id>
        <label>LDLRAD1</label>
    </interactant>
    <organismsDiffer>false</organismsDiffer>
    <experiments>3</experiments>
</comment>
<comment type="interaction">
    <interactant intactId="EBI-10290130">
        <id>Q96JW4</id>
    </interactant>
    <interactant intactId="EBI-17490413">
        <id>A8MZ59</id>
        <label>LEUTX</label>
    </interactant>
    <organismsDiffer>false</organismsDiffer>
    <experiments>3</experiments>
</comment>
<comment type="interaction">
    <interactant intactId="EBI-10290130">
        <id>Q96JW4</id>
    </interactant>
    <interactant intactId="EBI-2830566">
        <id>Q9H400</id>
        <label>LIME1</label>
    </interactant>
    <organismsDiffer>false</organismsDiffer>
    <experiments>3</experiments>
</comment>
<comment type="interaction">
    <interactant intactId="EBI-10290130">
        <id>Q96JW4</id>
    </interactant>
    <interactant intactId="EBI-9088345">
        <id>O95867</id>
        <label>LY6G6C</label>
    </interactant>
    <organismsDiffer>false</organismsDiffer>
    <experiments>3</experiments>
</comment>
<comment type="interaction">
    <interactant intactId="EBI-10290130">
        <id>Q96JW4</id>
    </interactant>
    <interactant intactId="EBI-10329546">
        <id>Q9Y5Y7</id>
        <label>LYVE1</label>
    </interactant>
    <organismsDiffer>false</organismsDiffer>
    <experiments>3</experiments>
</comment>
<comment type="interaction">
    <interactant intactId="EBI-10290130">
        <id>Q96JW4</id>
    </interactant>
    <interactant intactId="EBI-11956541">
        <id>Q9GZY8-5</id>
        <label>MFF</label>
    </interactant>
    <organismsDiffer>false</organismsDiffer>
    <experiments>3</experiments>
</comment>
<comment type="interaction">
    <interactant intactId="EBI-10290130">
        <id>Q96JW4</id>
    </interactant>
    <interactant intactId="EBI-16427978">
        <id>Q9BQ51</id>
        <label>PDCD1LG2</label>
    </interactant>
    <organismsDiffer>false</organismsDiffer>
    <experiments>3</experiments>
</comment>
<comment type="interaction">
    <interactant intactId="EBI-10290130">
        <id>Q96JW4</id>
    </interactant>
    <interactant intactId="EBI-3919694">
        <id>P15151</id>
        <label>PVR</label>
    </interactant>
    <organismsDiffer>false</organismsDiffer>
    <experiments>3</experiments>
</comment>
<comment type="interaction">
    <interactant intactId="EBI-10290130">
        <id>Q96JW4</id>
    </interactant>
    <interactant intactId="EBI-18037857">
        <id>Q3SXP7</id>
        <label>SHISAL1</label>
    </interactant>
    <organismsDiffer>false</organismsDiffer>
    <experiments>3</experiments>
</comment>
<comment type="interaction">
    <interactant intactId="EBI-10290130">
        <id>Q96JW4</id>
    </interactant>
    <interactant intactId="EBI-11343466">
        <id>Q9H2J7</id>
        <label>SLC6A15</label>
    </interactant>
    <organismsDiffer>false</organismsDiffer>
    <experiments>3</experiments>
</comment>
<comment type="interaction">
    <interactant intactId="EBI-10290130">
        <id>Q96JW4</id>
    </interactant>
    <interactant intactId="EBI-17280858">
        <id>Q8WWF3</id>
        <label>SSMEM1</label>
    </interactant>
    <organismsDiffer>false</organismsDiffer>
    <experiments>3</experiments>
</comment>
<comment type="interaction">
    <interactant intactId="EBI-10290130">
        <id>Q96JW4</id>
    </interactant>
    <interactant intactId="EBI-10982110">
        <id>Q96Q45-2</id>
        <label>TMEM237</label>
    </interactant>
    <organismsDiffer>false</organismsDiffer>
    <experiments>3</experiments>
</comment>
<comment type="subcellular location">
    <subcellularLocation>
        <location evidence="3">Cell membrane</location>
        <topology evidence="2">Multi-pass membrane protein</topology>
    </subcellularLocation>
</comment>
<comment type="similarity">
    <text evidence="4">Belongs to the SLC41A transporter family.</text>
</comment>
<comment type="sequence caution" evidence="4">
    <conflict type="erroneous initiation">
        <sequence resource="EMBL-CDS" id="AAH36734"/>
    </conflict>
    <text>Truncated N-terminus.</text>
</comment>
<comment type="sequence caution" evidence="4">
    <conflict type="erroneous initiation">
        <sequence resource="EMBL-CDS" id="AAI06872"/>
    </conflict>
    <text>Truncated N-terminus.</text>
</comment>
<comment type="sequence caution" evidence="4">
    <conflict type="erroneous initiation">
        <sequence resource="EMBL-CDS" id="AAI06873"/>
    </conflict>
    <text>Truncated N-terminus.</text>
</comment>
<comment type="sequence caution" evidence="4">
    <conflict type="frameshift">
        <sequence resource="EMBL-CDS" id="BAB55402"/>
    </conflict>
</comment>
<comment type="sequence caution" evidence="4">
    <conflict type="erroneous initiation">
        <sequence resource="EMBL-CDS" id="CAB66762"/>
    </conflict>
    <text>Truncated N-terminus.</text>
</comment>
<name>S41A2_HUMAN</name>
<protein>
    <recommendedName>
        <fullName>Solute carrier family 41 member 2</fullName>
    </recommendedName>
</protein>
<gene>
    <name type="primary">SLC41A2</name>
</gene>
<reference key="1">
    <citation type="journal article" date="2004" name="Nat. Genet.">
        <title>Complete sequencing and characterization of 21,243 full-length human cDNAs.</title>
        <authorList>
            <person name="Ota T."/>
            <person name="Suzuki Y."/>
            <person name="Nishikawa T."/>
            <person name="Otsuki T."/>
            <person name="Sugiyama T."/>
            <person name="Irie R."/>
            <person name="Wakamatsu A."/>
            <person name="Hayashi K."/>
            <person name="Sato H."/>
            <person name="Nagai K."/>
            <person name="Kimura K."/>
            <person name="Makita H."/>
            <person name="Sekine M."/>
            <person name="Obayashi M."/>
            <person name="Nishi T."/>
            <person name="Shibahara T."/>
            <person name="Tanaka T."/>
            <person name="Ishii S."/>
            <person name="Yamamoto J."/>
            <person name="Saito K."/>
            <person name="Kawai Y."/>
            <person name="Isono Y."/>
            <person name="Nakamura Y."/>
            <person name="Nagahari K."/>
            <person name="Murakami K."/>
            <person name="Yasuda T."/>
            <person name="Iwayanagi T."/>
            <person name="Wagatsuma M."/>
            <person name="Shiratori A."/>
            <person name="Sudo H."/>
            <person name="Hosoiri T."/>
            <person name="Kaku Y."/>
            <person name="Kodaira H."/>
            <person name="Kondo H."/>
            <person name="Sugawara M."/>
            <person name="Takahashi M."/>
            <person name="Kanda K."/>
            <person name="Yokoi T."/>
            <person name="Furuya T."/>
            <person name="Kikkawa E."/>
            <person name="Omura Y."/>
            <person name="Abe K."/>
            <person name="Kamihara K."/>
            <person name="Katsuta N."/>
            <person name="Sato K."/>
            <person name="Tanikawa M."/>
            <person name="Yamazaki M."/>
            <person name="Ninomiya K."/>
            <person name="Ishibashi T."/>
            <person name="Yamashita H."/>
            <person name="Murakawa K."/>
            <person name="Fujimori K."/>
            <person name="Tanai H."/>
            <person name="Kimata M."/>
            <person name="Watanabe M."/>
            <person name="Hiraoka S."/>
            <person name="Chiba Y."/>
            <person name="Ishida S."/>
            <person name="Ono Y."/>
            <person name="Takiguchi S."/>
            <person name="Watanabe S."/>
            <person name="Yosida M."/>
            <person name="Hotuta T."/>
            <person name="Kusano J."/>
            <person name="Kanehori K."/>
            <person name="Takahashi-Fujii A."/>
            <person name="Hara H."/>
            <person name="Tanase T.-O."/>
            <person name="Nomura Y."/>
            <person name="Togiya S."/>
            <person name="Komai F."/>
            <person name="Hara R."/>
            <person name="Takeuchi K."/>
            <person name="Arita M."/>
            <person name="Imose N."/>
            <person name="Musashino K."/>
            <person name="Yuuki H."/>
            <person name="Oshima A."/>
            <person name="Sasaki N."/>
            <person name="Aotsuka S."/>
            <person name="Yoshikawa Y."/>
            <person name="Matsunawa H."/>
            <person name="Ichihara T."/>
            <person name="Shiohata N."/>
            <person name="Sano S."/>
            <person name="Moriya S."/>
            <person name="Momiyama H."/>
            <person name="Satoh N."/>
            <person name="Takami S."/>
            <person name="Terashima Y."/>
            <person name="Suzuki O."/>
            <person name="Nakagawa S."/>
            <person name="Senoh A."/>
            <person name="Mizoguchi H."/>
            <person name="Goto Y."/>
            <person name="Shimizu F."/>
            <person name="Wakebe H."/>
            <person name="Hishigaki H."/>
            <person name="Watanabe T."/>
            <person name="Sugiyama A."/>
            <person name="Takemoto M."/>
            <person name="Kawakami B."/>
            <person name="Yamazaki M."/>
            <person name="Watanabe K."/>
            <person name="Kumagai A."/>
            <person name="Itakura S."/>
            <person name="Fukuzumi Y."/>
            <person name="Fujimori Y."/>
            <person name="Komiyama M."/>
            <person name="Tashiro H."/>
            <person name="Tanigami A."/>
            <person name="Fujiwara T."/>
            <person name="Ono T."/>
            <person name="Yamada K."/>
            <person name="Fujii Y."/>
            <person name="Ozaki K."/>
            <person name="Hirao M."/>
            <person name="Ohmori Y."/>
            <person name="Kawabata A."/>
            <person name="Hikiji T."/>
            <person name="Kobatake N."/>
            <person name="Inagaki H."/>
            <person name="Ikema Y."/>
            <person name="Okamoto S."/>
            <person name="Okitani R."/>
            <person name="Kawakami T."/>
            <person name="Noguchi S."/>
            <person name="Itoh T."/>
            <person name="Shigeta K."/>
            <person name="Senba T."/>
            <person name="Matsumura K."/>
            <person name="Nakajima Y."/>
            <person name="Mizuno T."/>
            <person name="Morinaga M."/>
            <person name="Sasaki M."/>
            <person name="Togashi T."/>
            <person name="Oyama M."/>
            <person name="Hata H."/>
            <person name="Watanabe M."/>
            <person name="Komatsu T."/>
            <person name="Mizushima-Sugano J."/>
            <person name="Satoh T."/>
            <person name="Shirai Y."/>
            <person name="Takahashi Y."/>
            <person name="Nakagawa K."/>
            <person name="Okumura K."/>
            <person name="Nagase T."/>
            <person name="Nomura N."/>
            <person name="Kikuchi H."/>
            <person name="Masuho Y."/>
            <person name="Yamashita R."/>
            <person name="Nakai K."/>
            <person name="Yada T."/>
            <person name="Nakamura Y."/>
            <person name="Ohara O."/>
            <person name="Isogai T."/>
            <person name="Sugano S."/>
        </authorList>
    </citation>
    <scope>NUCLEOTIDE SEQUENCE [LARGE SCALE MRNA]</scope>
    <source>
        <tissue>Placenta</tissue>
    </source>
</reference>
<reference key="2">
    <citation type="journal article" date="2004" name="Genome Res.">
        <title>The status, quality, and expansion of the NIH full-length cDNA project: the Mammalian Gene Collection (MGC).</title>
        <authorList>
            <consortium name="The MGC Project Team"/>
        </authorList>
    </citation>
    <scope>NUCLEOTIDE SEQUENCE [LARGE SCALE MRNA]</scope>
    <source>
        <tissue>Skin</tissue>
    </source>
</reference>
<reference key="3">
    <citation type="journal article" date="2001" name="Genome Res.">
        <title>Towards a catalog of human genes and proteins: sequencing and analysis of 500 novel complete protein coding human cDNAs.</title>
        <authorList>
            <person name="Wiemann S."/>
            <person name="Weil B."/>
            <person name="Wellenreuther R."/>
            <person name="Gassenhuber J."/>
            <person name="Glassl S."/>
            <person name="Ansorge W."/>
            <person name="Boecher M."/>
            <person name="Bloecker H."/>
            <person name="Bauersachs S."/>
            <person name="Blum H."/>
            <person name="Lauber J."/>
            <person name="Duesterhoeft A."/>
            <person name="Beyer A."/>
            <person name="Koehrer K."/>
            <person name="Strack N."/>
            <person name="Mewes H.-W."/>
            <person name="Ottenwaelder B."/>
            <person name="Obermaier B."/>
            <person name="Tampe J."/>
            <person name="Heubner D."/>
            <person name="Wambutt R."/>
            <person name="Korn B."/>
            <person name="Klein M."/>
            <person name="Poustka A."/>
        </authorList>
    </citation>
    <scope>NUCLEOTIDE SEQUENCE [LARGE SCALE MRNA] OF 48-573</scope>
    <source>
        <tissue>Testis</tissue>
    </source>
</reference>
<reference key="4">
    <citation type="journal article" date="2007" name="Biochem. J.">
        <title>SLC41A2 encodes a plasma-membrane Mg2+ transporter.</title>
        <authorList>
            <person name="Sahni J."/>
            <person name="Nelson B."/>
            <person name="Scharenberg A.M."/>
        </authorList>
    </citation>
    <scope>FUNCTION</scope>
    <scope>TOPOLOGY</scope>
    <scope>SUBCELLULAR LOCATION</scope>
    <scope>TRANSPORTER ACTIVITY</scope>
</reference>
<proteinExistence type="evidence at protein level"/>
<sequence length="573" mass="62473">MTNSKGRSITDKTSGGPSSGGGFVDWTLRLNTIQSDKFLNLLLSMVPVIYQKNQEDRHKKANGIWQDGLSTAVQTFSNRSEQHMEYHSFSEQSFHANNGHASSSCSQKYDDYANYNYCDGRETSETTAMLQDEDISSDGDEDAIVEVTPKLPKESSGIMALQILVPFLLAGFGTVSAGMVLDIVQHWEVFRKVTEVFILVPALLGLKGNLEMTLASRLSTAVNIGKMDSPIEKWNLIIGNLALKQVQATVVGFLAAVAAIILGWIPEGKYYLDHSILLCSSSVATAFIASLLQGIIMVGVIVGSKKTGINPDNVATPIAASFGDLITLAILAWISQGLYSCLETYYYISPLVGVFFLALTPIWIIIAAKHPATRTVLHSGWEPVITAMVISSIGGLILDTTVSDPNLVGIVVYTPVINGIGGNLVAIQASRISTYLHLHSIPGELPDEPKGCYYPFRTFFGPGVNNKSAQVLLLLVIPGHLIFLYTIHLMKSGHTSLTIIFIVVYLFGAVLQVFTLLWIADWMVHHFWRKGKDPDSFSIPYLTALGDLLGTALLALSFHFLWLIGDRDGDVGD</sequence>
<dbReference type="EMBL" id="AK027838">
    <property type="protein sequence ID" value="BAB55402.1"/>
    <property type="status" value="ALT_FRAME"/>
    <property type="molecule type" value="mRNA"/>
</dbReference>
<dbReference type="EMBL" id="BC036734">
    <property type="protein sequence ID" value="AAH36734.1"/>
    <property type="status" value="ALT_INIT"/>
    <property type="molecule type" value="mRNA"/>
</dbReference>
<dbReference type="EMBL" id="BC106871">
    <property type="protein sequence ID" value="AAI06872.2"/>
    <property type="status" value="ALT_INIT"/>
    <property type="molecule type" value="mRNA"/>
</dbReference>
<dbReference type="EMBL" id="BC106872">
    <property type="protein sequence ID" value="AAI06873.2"/>
    <property type="status" value="ALT_INIT"/>
    <property type="molecule type" value="mRNA"/>
</dbReference>
<dbReference type="EMBL" id="AL136828">
    <property type="protein sequence ID" value="CAB66762.1"/>
    <property type="status" value="ALT_INIT"/>
    <property type="molecule type" value="mRNA"/>
</dbReference>
<dbReference type="CCDS" id="CCDS9100.2"/>
<dbReference type="RefSeq" id="NP_001339098.1">
    <property type="nucleotide sequence ID" value="NM_001352169.2"/>
</dbReference>
<dbReference type="RefSeq" id="NP_001339099.1">
    <property type="nucleotide sequence ID" value="NM_001352170.3"/>
</dbReference>
<dbReference type="RefSeq" id="NP_001339100.1">
    <property type="nucleotide sequence ID" value="NM_001352171.3"/>
</dbReference>
<dbReference type="RefSeq" id="NP_001339101.1">
    <property type="nucleotide sequence ID" value="NM_001352172.3"/>
</dbReference>
<dbReference type="RefSeq" id="NP_001374054.1">
    <property type="nucleotide sequence ID" value="NM_001387125.1"/>
</dbReference>
<dbReference type="RefSeq" id="NP_001374055.1">
    <property type="nucleotide sequence ID" value="NM_001387126.1"/>
</dbReference>
<dbReference type="RefSeq" id="NP_001374056.1">
    <property type="nucleotide sequence ID" value="NM_001387127.1"/>
</dbReference>
<dbReference type="RefSeq" id="NP_115524.3">
    <property type="nucleotide sequence ID" value="NM_032148.3"/>
</dbReference>
<dbReference type="RefSeq" id="XP_005269233.1">
    <property type="nucleotide sequence ID" value="XM_005269176.1"/>
</dbReference>
<dbReference type="RefSeq" id="XP_005269235.1">
    <property type="nucleotide sequence ID" value="XM_005269178.1"/>
</dbReference>
<dbReference type="RefSeq" id="XP_005269236.1">
    <property type="nucleotide sequence ID" value="XM_005269179.2"/>
</dbReference>
<dbReference type="RefSeq" id="XP_006719693.1">
    <property type="nucleotide sequence ID" value="XM_006719630.2"/>
</dbReference>
<dbReference type="RefSeq" id="XP_011537109.1">
    <property type="nucleotide sequence ID" value="XM_011538807.2"/>
</dbReference>
<dbReference type="RefSeq" id="XP_011537110.1">
    <property type="nucleotide sequence ID" value="XM_011538808.1"/>
</dbReference>
<dbReference type="RefSeq" id="XP_011537111.1">
    <property type="nucleotide sequence ID" value="XM_011538809.1"/>
</dbReference>
<dbReference type="RefSeq" id="XP_011537112.1">
    <property type="nucleotide sequence ID" value="XM_011538810.2"/>
</dbReference>
<dbReference type="RefSeq" id="XP_011537113.1">
    <property type="nucleotide sequence ID" value="XM_011538811.3"/>
</dbReference>
<dbReference type="RefSeq" id="XP_016875502.1">
    <property type="nucleotide sequence ID" value="XM_017020013.2"/>
</dbReference>
<dbReference type="RefSeq" id="XP_047285604.1">
    <property type="nucleotide sequence ID" value="XM_047429648.1"/>
</dbReference>
<dbReference type="RefSeq" id="XP_054229397.1">
    <property type="nucleotide sequence ID" value="XM_054373422.1"/>
</dbReference>
<dbReference type="RefSeq" id="XP_054229398.1">
    <property type="nucleotide sequence ID" value="XM_054373423.1"/>
</dbReference>
<dbReference type="RefSeq" id="XP_054229399.1">
    <property type="nucleotide sequence ID" value="XM_054373424.1"/>
</dbReference>
<dbReference type="RefSeq" id="XP_054229400.1">
    <property type="nucleotide sequence ID" value="XM_054373425.1"/>
</dbReference>
<dbReference type="BioGRID" id="123891">
    <property type="interactions" value="40"/>
</dbReference>
<dbReference type="FunCoup" id="Q96JW4">
    <property type="interactions" value="511"/>
</dbReference>
<dbReference type="IntAct" id="Q96JW4">
    <property type="interactions" value="32"/>
</dbReference>
<dbReference type="STRING" id="9606.ENSP00000258538"/>
<dbReference type="TCDB" id="1.A.26.2.2">
    <property type="family name" value="the mg(2+) transporter-e (mgte) family"/>
</dbReference>
<dbReference type="GlyGen" id="Q96JW4">
    <property type="glycosylation" value="1 site, 1 O-linked glycan (1 site)"/>
</dbReference>
<dbReference type="iPTMnet" id="Q96JW4"/>
<dbReference type="PhosphoSitePlus" id="Q96JW4"/>
<dbReference type="SwissPalm" id="Q96JW4"/>
<dbReference type="BioMuta" id="SLC41A2"/>
<dbReference type="DMDM" id="152112286"/>
<dbReference type="jPOST" id="Q96JW4"/>
<dbReference type="MassIVE" id="Q96JW4"/>
<dbReference type="PaxDb" id="9606-ENSP00000258538"/>
<dbReference type="PeptideAtlas" id="Q96JW4"/>
<dbReference type="ProteomicsDB" id="77010"/>
<dbReference type="Antibodypedia" id="30606">
    <property type="antibodies" value="145 antibodies from 17 providers"/>
</dbReference>
<dbReference type="DNASU" id="84102"/>
<dbReference type="Ensembl" id="ENST00000258538.8">
    <property type="protein sequence ID" value="ENSP00000258538.3"/>
    <property type="gene ID" value="ENSG00000136052.10"/>
</dbReference>
<dbReference type="GeneID" id="84102"/>
<dbReference type="KEGG" id="hsa:84102"/>
<dbReference type="MANE-Select" id="ENST00000258538.8">
    <property type="protein sequence ID" value="ENSP00000258538.3"/>
    <property type="RefSeq nucleotide sequence ID" value="NM_001352171.3"/>
    <property type="RefSeq protein sequence ID" value="NP_001339100.1"/>
</dbReference>
<dbReference type="UCSC" id="uc001tla.4">
    <property type="organism name" value="human"/>
</dbReference>
<dbReference type="AGR" id="HGNC:31045"/>
<dbReference type="CTD" id="84102"/>
<dbReference type="DisGeNET" id="84102"/>
<dbReference type="GeneCards" id="SLC41A2"/>
<dbReference type="HGNC" id="HGNC:31045">
    <property type="gene designation" value="SLC41A2"/>
</dbReference>
<dbReference type="HPA" id="ENSG00000136052">
    <property type="expression patterns" value="Tissue enhanced (liver)"/>
</dbReference>
<dbReference type="MIM" id="610802">
    <property type="type" value="gene"/>
</dbReference>
<dbReference type="neXtProt" id="NX_Q96JW4"/>
<dbReference type="OpenTargets" id="ENSG00000136052"/>
<dbReference type="PharmGKB" id="PA134931432"/>
<dbReference type="VEuPathDB" id="HostDB:ENSG00000136052"/>
<dbReference type="eggNOG" id="KOG3788">
    <property type="taxonomic scope" value="Eukaryota"/>
</dbReference>
<dbReference type="GeneTree" id="ENSGT00950000183042"/>
<dbReference type="HOGENOM" id="CLU_018207_3_0_1"/>
<dbReference type="InParanoid" id="Q96JW4"/>
<dbReference type="OMA" id="NDKAYHG"/>
<dbReference type="OrthoDB" id="5791097at2759"/>
<dbReference type="PAN-GO" id="Q96JW4">
    <property type="GO annotations" value="1 GO annotation based on evolutionary models"/>
</dbReference>
<dbReference type="PhylomeDB" id="Q96JW4"/>
<dbReference type="TreeFam" id="TF313647"/>
<dbReference type="PathwayCommons" id="Q96JW4"/>
<dbReference type="Reactome" id="R-HSA-425410">
    <property type="pathway name" value="Metal ion SLC transporters"/>
</dbReference>
<dbReference type="SignaLink" id="Q96JW4"/>
<dbReference type="BioGRID-ORCS" id="84102">
    <property type="hits" value="9 hits in 1148 CRISPR screens"/>
</dbReference>
<dbReference type="ChiTaRS" id="SLC41A2">
    <property type="organism name" value="human"/>
</dbReference>
<dbReference type="GenomeRNAi" id="84102"/>
<dbReference type="Pharos" id="Q96JW4">
    <property type="development level" value="Tbio"/>
</dbReference>
<dbReference type="PRO" id="PR:Q96JW4"/>
<dbReference type="Proteomes" id="UP000005640">
    <property type="component" value="Chromosome 12"/>
</dbReference>
<dbReference type="RNAct" id="Q96JW4">
    <property type="molecule type" value="protein"/>
</dbReference>
<dbReference type="Bgee" id="ENSG00000136052">
    <property type="expression patterns" value="Expressed in calcaneal tendon and 161 other cell types or tissues"/>
</dbReference>
<dbReference type="ExpressionAtlas" id="Q96JW4">
    <property type="expression patterns" value="baseline and differential"/>
</dbReference>
<dbReference type="GO" id="GO:0005886">
    <property type="term" value="C:plasma membrane"/>
    <property type="evidence" value="ECO:0000314"/>
    <property type="project" value="UniProtKB"/>
</dbReference>
<dbReference type="GO" id="GO:0015095">
    <property type="term" value="F:magnesium ion transmembrane transporter activity"/>
    <property type="evidence" value="ECO:0000304"/>
    <property type="project" value="Reactome"/>
</dbReference>
<dbReference type="GO" id="GO:0006824">
    <property type="term" value="P:cobalt ion transport"/>
    <property type="evidence" value="ECO:0000250"/>
    <property type="project" value="UniProtKB"/>
</dbReference>
<dbReference type="GO" id="GO:0006826">
    <property type="term" value="P:iron ion transport"/>
    <property type="evidence" value="ECO:0000250"/>
    <property type="project" value="UniProtKB"/>
</dbReference>
<dbReference type="GO" id="GO:0015693">
    <property type="term" value="P:magnesium ion transport"/>
    <property type="evidence" value="ECO:0000314"/>
    <property type="project" value="UniProtKB"/>
</dbReference>
<dbReference type="GO" id="GO:0006828">
    <property type="term" value="P:manganese ion transport"/>
    <property type="evidence" value="ECO:0000250"/>
    <property type="project" value="UniProtKB"/>
</dbReference>
<dbReference type="GO" id="GO:0015675">
    <property type="term" value="P:nickel cation transport"/>
    <property type="evidence" value="ECO:0000250"/>
    <property type="project" value="UniProtKB"/>
</dbReference>
<dbReference type="FunFam" id="1.10.357.20:FF:000001">
    <property type="entry name" value="Solute carrier family 41 member 2"/>
    <property type="match status" value="1"/>
</dbReference>
<dbReference type="FunFam" id="1.10.357.20:FF:000002">
    <property type="entry name" value="Solute carrier family 41, member 2"/>
    <property type="match status" value="1"/>
</dbReference>
<dbReference type="Gene3D" id="1.10.357.20">
    <property type="entry name" value="SLC41 divalent cation transporters, integral membrane domain"/>
    <property type="match status" value="2"/>
</dbReference>
<dbReference type="InterPro" id="IPR006667">
    <property type="entry name" value="SLC41_membr_dom"/>
</dbReference>
<dbReference type="InterPro" id="IPR036739">
    <property type="entry name" value="SLC41_membr_dom_sf"/>
</dbReference>
<dbReference type="InterPro" id="IPR045349">
    <property type="entry name" value="SLC41A1-3"/>
</dbReference>
<dbReference type="PANTHER" id="PTHR16228">
    <property type="entry name" value="DIVALENT CATION TRANSPORTER SOLUTE CARRIER FAMILY 41"/>
    <property type="match status" value="1"/>
</dbReference>
<dbReference type="PANTHER" id="PTHR16228:SF25">
    <property type="entry name" value="SOLUTE CARRIER FAMILY 41 MEMBER 2"/>
    <property type="match status" value="1"/>
</dbReference>
<dbReference type="Pfam" id="PF01769">
    <property type="entry name" value="MgtE"/>
    <property type="match status" value="2"/>
</dbReference>
<dbReference type="SUPFAM" id="SSF161093">
    <property type="entry name" value="MgtE membrane domain-like"/>
    <property type="match status" value="2"/>
</dbReference>
<evidence type="ECO:0000250" key="1">
    <source>
        <dbReference type="UniProtKB" id="Q8BYR8"/>
    </source>
</evidence>
<evidence type="ECO:0000255" key="2"/>
<evidence type="ECO:0000269" key="3">
    <source>
    </source>
</evidence>
<evidence type="ECO:0000305" key="4"/>
<accession>Q96JW4</accession>
<accession>Q3KP68</accession>
<accession>Q9H0E5</accession>
<organism>
    <name type="scientific">Homo sapiens</name>
    <name type="common">Human</name>
    <dbReference type="NCBI Taxonomy" id="9606"/>
    <lineage>
        <taxon>Eukaryota</taxon>
        <taxon>Metazoa</taxon>
        <taxon>Chordata</taxon>
        <taxon>Craniata</taxon>
        <taxon>Vertebrata</taxon>
        <taxon>Euteleostomi</taxon>
        <taxon>Mammalia</taxon>
        <taxon>Eutheria</taxon>
        <taxon>Euarchontoglires</taxon>
        <taxon>Primates</taxon>
        <taxon>Haplorrhini</taxon>
        <taxon>Catarrhini</taxon>
        <taxon>Hominidae</taxon>
        <taxon>Homo</taxon>
    </lineage>
</organism>
<feature type="chain" id="PRO_0000295040" description="Solute carrier family 41 member 2">
    <location>
        <begin position="1"/>
        <end position="573"/>
    </location>
</feature>
<feature type="topological domain" description="Extracellular" evidence="3">
    <location>
        <begin position="1"/>
        <end position="162"/>
    </location>
</feature>
<feature type="transmembrane region" description="Helical" evidence="2">
    <location>
        <begin position="163"/>
        <end position="183"/>
    </location>
</feature>
<feature type="topological domain" description="Cytoplasmic" evidence="3">
    <location>
        <begin position="184"/>
        <end position="195"/>
    </location>
</feature>
<feature type="transmembrane region" description="Helical" evidence="2">
    <location>
        <begin position="196"/>
        <end position="216"/>
    </location>
</feature>
<feature type="topological domain" description="Extracellular" evidence="3">
    <location>
        <begin position="217"/>
        <end position="245"/>
    </location>
</feature>
<feature type="transmembrane region" description="Helical" evidence="2">
    <location>
        <begin position="246"/>
        <end position="266"/>
    </location>
</feature>
<feature type="topological domain" description="Cytoplasmic" evidence="3">
    <location>
        <begin position="267"/>
        <end position="282"/>
    </location>
</feature>
<feature type="transmembrane region" description="Helical" evidence="2">
    <location>
        <begin position="283"/>
        <end position="303"/>
    </location>
</feature>
<feature type="topological domain" description="Extracellular" evidence="3">
    <location>
        <begin position="304"/>
        <end position="313"/>
    </location>
</feature>
<feature type="transmembrane region" description="Helical" evidence="2">
    <location>
        <begin position="314"/>
        <end position="334"/>
    </location>
</feature>
<feature type="topological domain" description="Cytoplasmic" evidence="3">
    <location>
        <begin position="335"/>
        <end position="347"/>
    </location>
</feature>
<feature type="transmembrane region" description="Helical" evidence="2">
    <location>
        <begin position="348"/>
        <end position="368"/>
    </location>
</feature>
<feature type="topological domain" description="Extracellular" evidence="3">
    <location>
        <begin position="369"/>
        <end position="376"/>
    </location>
</feature>
<feature type="transmembrane region" description="Helical" evidence="2">
    <location>
        <begin position="377"/>
        <end position="397"/>
    </location>
</feature>
<feature type="topological domain" description="Cytoplasmic" evidence="3">
    <location>
        <begin position="398"/>
        <end position="406"/>
    </location>
</feature>
<feature type="transmembrane region" description="Helical" evidence="2">
    <location>
        <begin position="407"/>
        <end position="427"/>
    </location>
</feature>
<feature type="topological domain" description="Extracellular" evidence="3">
    <location>
        <begin position="428"/>
        <end position="469"/>
    </location>
</feature>
<feature type="transmembrane region" description="Helical" evidence="2">
    <location>
        <begin position="470"/>
        <end position="490"/>
    </location>
</feature>
<feature type="topological domain" description="Cytoplasmic" evidence="3">
    <location>
        <begin position="491"/>
        <end position="498"/>
    </location>
</feature>
<feature type="transmembrane region" description="Helical" evidence="2">
    <location>
        <begin position="499"/>
        <end position="519"/>
    </location>
</feature>
<feature type="topological domain" description="Extracellular" evidence="3">
    <location>
        <begin position="520"/>
        <end position="543"/>
    </location>
</feature>
<feature type="transmembrane region" description="Helical" evidence="2">
    <location>
        <begin position="544"/>
        <end position="564"/>
    </location>
</feature>
<feature type="topological domain" description="Cytoplasmic" evidence="3">
    <location>
        <begin position="565"/>
        <end position="573"/>
    </location>
</feature>
<feature type="modified residue" description="Phosphoserine" evidence="1">
    <location>
        <position position="136"/>
    </location>
</feature>
<feature type="modified residue" description="Phosphoserine" evidence="1">
    <location>
        <position position="137"/>
    </location>
</feature>
<feature type="sequence conflict" description="In Ref. 1; BAB55402." evidence="4" ref="1">
    <original>Y</original>
    <variation>C</variation>
    <location>
        <position position="115"/>
    </location>
</feature>
<keyword id="KW-1003">Cell membrane</keyword>
<keyword id="KW-0406">Ion transport</keyword>
<keyword id="KW-0460">Magnesium</keyword>
<keyword id="KW-0472">Membrane</keyword>
<keyword id="KW-0597">Phosphoprotein</keyword>
<keyword id="KW-1267">Proteomics identification</keyword>
<keyword id="KW-1185">Reference proteome</keyword>
<keyword id="KW-0677">Repeat</keyword>
<keyword id="KW-0812">Transmembrane</keyword>
<keyword id="KW-1133">Transmembrane helix</keyword>
<keyword id="KW-0813">Transport</keyword>